<protein>
    <recommendedName>
        <fullName evidence="1">Vacuolar ATPase assembly integral membrane protein VMA21 homolog</fullName>
    </recommendedName>
</protein>
<proteinExistence type="inferred from homology"/>
<keyword id="KW-0968">Cytoplasmic vesicle</keyword>
<keyword id="KW-0256">Endoplasmic reticulum</keyword>
<keyword id="KW-0472">Membrane</keyword>
<keyword id="KW-1185">Reference proteome</keyword>
<keyword id="KW-0812">Transmembrane</keyword>
<keyword id="KW-1133">Transmembrane helix</keyword>
<accession>Q9VPE4</accession>
<accession>Q8T3M1</accession>
<accession>Q9VPE5</accession>
<gene>
    <name type="ORF">CG5969</name>
</gene>
<evidence type="ECO:0000255" key="1">
    <source>
        <dbReference type="HAMAP-Rule" id="MF_03058"/>
    </source>
</evidence>
<evidence type="ECO:0000256" key="2">
    <source>
        <dbReference type="SAM" id="MobiDB-lite"/>
    </source>
</evidence>
<evidence type="ECO:0000305" key="3"/>
<reference key="1">
    <citation type="journal article" date="2000" name="Science">
        <title>The genome sequence of Drosophila melanogaster.</title>
        <authorList>
            <person name="Adams M.D."/>
            <person name="Celniker S.E."/>
            <person name="Holt R.A."/>
            <person name="Evans C.A."/>
            <person name="Gocayne J.D."/>
            <person name="Amanatides P.G."/>
            <person name="Scherer S.E."/>
            <person name="Li P.W."/>
            <person name="Hoskins R.A."/>
            <person name="Galle R.F."/>
            <person name="George R.A."/>
            <person name="Lewis S.E."/>
            <person name="Richards S."/>
            <person name="Ashburner M."/>
            <person name="Henderson S.N."/>
            <person name="Sutton G.G."/>
            <person name="Wortman J.R."/>
            <person name="Yandell M.D."/>
            <person name="Zhang Q."/>
            <person name="Chen L.X."/>
            <person name="Brandon R.C."/>
            <person name="Rogers Y.-H.C."/>
            <person name="Blazej R.G."/>
            <person name="Champe M."/>
            <person name="Pfeiffer B.D."/>
            <person name="Wan K.H."/>
            <person name="Doyle C."/>
            <person name="Baxter E.G."/>
            <person name="Helt G."/>
            <person name="Nelson C.R."/>
            <person name="Miklos G.L.G."/>
            <person name="Abril J.F."/>
            <person name="Agbayani A."/>
            <person name="An H.-J."/>
            <person name="Andrews-Pfannkoch C."/>
            <person name="Baldwin D."/>
            <person name="Ballew R.M."/>
            <person name="Basu A."/>
            <person name="Baxendale J."/>
            <person name="Bayraktaroglu L."/>
            <person name="Beasley E.M."/>
            <person name="Beeson K.Y."/>
            <person name="Benos P.V."/>
            <person name="Berman B.P."/>
            <person name="Bhandari D."/>
            <person name="Bolshakov S."/>
            <person name="Borkova D."/>
            <person name="Botchan M.R."/>
            <person name="Bouck J."/>
            <person name="Brokstein P."/>
            <person name="Brottier P."/>
            <person name="Burtis K.C."/>
            <person name="Busam D.A."/>
            <person name="Butler H."/>
            <person name="Cadieu E."/>
            <person name="Center A."/>
            <person name="Chandra I."/>
            <person name="Cherry J.M."/>
            <person name="Cawley S."/>
            <person name="Dahlke C."/>
            <person name="Davenport L.B."/>
            <person name="Davies P."/>
            <person name="de Pablos B."/>
            <person name="Delcher A."/>
            <person name="Deng Z."/>
            <person name="Mays A.D."/>
            <person name="Dew I."/>
            <person name="Dietz S.M."/>
            <person name="Dodson K."/>
            <person name="Doup L.E."/>
            <person name="Downes M."/>
            <person name="Dugan-Rocha S."/>
            <person name="Dunkov B.C."/>
            <person name="Dunn P."/>
            <person name="Durbin K.J."/>
            <person name="Evangelista C.C."/>
            <person name="Ferraz C."/>
            <person name="Ferriera S."/>
            <person name="Fleischmann W."/>
            <person name="Fosler C."/>
            <person name="Gabrielian A.E."/>
            <person name="Garg N.S."/>
            <person name="Gelbart W.M."/>
            <person name="Glasser K."/>
            <person name="Glodek A."/>
            <person name="Gong F."/>
            <person name="Gorrell J.H."/>
            <person name="Gu Z."/>
            <person name="Guan P."/>
            <person name="Harris M."/>
            <person name="Harris N.L."/>
            <person name="Harvey D.A."/>
            <person name="Heiman T.J."/>
            <person name="Hernandez J.R."/>
            <person name="Houck J."/>
            <person name="Hostin D."/>
            <person name="Houston K.A."/>
            <person name="Howland T.J."/>
            <person name="Wei M.-H."/>
            <person name="Ibegwam C."/>
            <person name="Jalali M."/>
            <person name="Kalush F."/>
            <person name="Karpen G.H."/>
            <person name="Ke Z."/>
            <person name="Kennison J.A."/>
            <person name="Ketchum K.A."/>
            <person name="Kimmel B.E."/>
            <person name="Kodira C.D."/>
            <person name="Kraft C.L."/>
            <person name="Kravitz S."/>
            <person name="Kulp D."/>
            <person name="Lai Z."/>
            <person name="Lasko P."/>
            <person name="Lei Y."/>
            <person name="Levitsky A.A."/>
            <person name="Li J.H."/>
            <person name="Li Z."/>
            <person name="Liang Y."/>
            <person name="Lin X."/>
            <person name="Liu X."/>
            <person name="Mattei B."/>
            <person name="McIntosh T.C."/>
            <person name="McLeod M.P."/>
            <person name="McPherson D."/>
            <person name="Merkulov G."/>
            <person name="Milshina N.V."/>
            <person name="Mobarry C."/>
            <person name="Morris J."/>
            <person name="Moshrefi A."/>
            <person name="Mount S.M."/>
            <person name="Moy M."/>
            <person name="Murphy B."/>
            <person name="Murphy L."/>
            <person name="Muzny D.M."/>
            <person name="Nelson D.L."/>
            <person name="Nelson D.R."/>
            <person name="Nelson K.A."/>
            <person name="Nixon K."/>
            <person name="Nusskern D.R."/>
            <person name="Pacleb J.M."/>
            <person name="Palazzolo M."/>
            <person name="Pittman G.S."/>
            <person name="Pan S."/>
            <person name="Pollard J."/>
            <person name="Puri V."/>
            <person name="Reese M.G."/>
            <person name="Reinert K."/>
            <person name="Remington K."/>
            <person name="Saunders R.D.C."/>
            <person name="Scheeler F."/>
            <person name="Shen H."/>
            <person name="Shue B.C."/>
            <person name="Siden-Kiamos I."/>
            <person name="Simpson M."/>
            <person name="Skupski M.P."/>
            <person name="Smith T.J."/>
            <person name="Spier E."/>
            <person name="Spradling A.C."/>
            <person name="Stapleton M."/>
            <person name="Strong R."/>
            <person name="Sun E."/>
            <person name="Svirskas R."/>
            <person name="Tector C."/>
            <person name="Turner R."/>
            <person name="Venter E."/>
            <person name="Wang A.H."/>
            <person name="Wang X."/>
            <person name="Wang Z.-Y."/>
            <person name="Wassarman D.A."/>
            <person name="Weinstock G.M."/>
            <person name="Weissenbach J."/>
            <person name="Williams S.M."/>
            <person name="Woodage T."/>
            <person name="Worley K.C."/>
            <person name="Wu D."/>
            <person name="Yang S."/>
            <person name="Yao Q.A."/>
            <person name="Ye J."/>
            <person name="Yeh R.-F."/>
            <person name="Zaveri J.S."/>
            <person name="Zhan M."/>
            <person name="Zhang G."/>
            <person name="Zhao Q."/>
            <person name="Zheng L."/>
            <person name="Zheng X.H."/>
            <person name="Zhong F.N."/>
            <person name="Zhong W."/>
            <person name="Zhou X."/>
            <person name="Zhu S.C."/>
            <person name="Zhu X."/>
            <person name="Smith H.O."/>
            <person name="Gibbs R.A."/>
            <person name="Myers E.W."/>
            <person name="Rubin G.M."/>
            <person name="Venter J.C."/>
        </authorList>
    </citation>
    <scope>NUCLEOTIDE SEQUENCE [LARGE SCALE GENOMIC DNA]</scope>
    <source>
        <strain>Berkeley</strain>
    </source>
</reference>
<reference key="2">
    <citation type="journal article" date="2002" name="Genome Biol.">
        <title>Annotation of the Drosophila melanogaster euchromatic genome: a systematic review.</title>
        <authorList>
            <person name="Misra S."/>
            <person name="Crosby M.A."/>
            <person name="Mungall C.J."/>
            <person name="Matthews B.B."/>
            <person name="Campbell K.S."/>
            <person name="Hradecky P."/>
            <person name="Huang Y."/>
            <person name="Kaminker J.S."/>
            <person name="Millburn G.H."/>
            <person name="Prochnik S.E."/>
            <person name="Smith C.D."/>
            <person name="Tupy J.L."/>
            <person name="Whitfield E.J."/>
            <person name="Bayraktaroglu L."/>
            <person name="Berman B.P."/>
            <person name="Bettencourt B.R."/>
            <person name="Celniker S.E."/>
            <person name="de Grey A.D.N.J."/>
            <person name="Drysdale R.A."/>
            <person name="Harris N.L."/>
            <person name="Richter J."/>
            <person name="Russo S."/>
            <person name="Schroeder A.J."/>
            <person name="Shu S.Q."/>
            <person name="Stapleton M."/>
            <person name="Yamada C."/>
            <person name="Ashburner M."/>
            <person name="Gelbart W.M."/>
            <person name="Rubin G.M."/>
            <person name="Lewis S.E."/>
        </authorList>
    </citation>
    <scope>GENOME REANNOTATION</scope>
    <source>
        <strain>Berkeley</strain>
    </source>
</reference>
<reference key="3">
    <citation type="journal article" date="2002" name="Genome Biol.">
        <title>A Drosophila full-length cDNA resource.</title>
        <authorList>
            <person name="Stapleton M."/>
            <person name="Carlson J.W."/>
            <person name="Brokstein P."/>
            <person name="Yu C."/>
            <person name="Champe M."/>
            <person name="George R.A."/>
            <person name="Guarin H."/>
            <person name="Kronmiller B."/>
            <person name="Pacleb J.M."/>
            <person name="Park S."/>
            <person name="Wan K.H."/>
            <person name="Rubin G.M."/>
            <person name="Celniker S.E."/>
        </authorList>
    </citation>
    <scope>NUCLEOTIDE SEQUENCE [LARGE SCALE MRNA]</scope>
    <source>
        <strain>Berkeley</strain>
        <tissue>Embryo</tissue>
        <tissue>Ovary</tissue>
    </source>
</reference>
<reference key="4">
    <citation type="submission" date="2008-11" db="EMBL/GenBank/DDBJ databases">
        <authorList>
            <person name="Carlson J.W."/>
            <person name="Booth B."/>
            <person name="Frise E."/>
            <person name="Park S."/>
            <person name="Wan K.H."/>
            <person name="Yu C."/>
            <person name="Celniker S.E."/>
        </authorList>
    </citation>
    <scope>NUCLEOTIDE SEQUENCE [LARGE SCALE MRNA]</scope>
    <source>
        <strain>Berkeley</strain>
    </source>
</reference>
<comment type="function">
    <text evidence="1">Required for the assembly of the V0 complex of the vacuolar ATPase (V-ATPase) in the endoplasmic reticulum.</text>
</comment>
<comment type="subcellular location">
    <subcellularLocation>
        <location evidence="1">Endoplasmic reticulum membrane</location>
        <topology evidence="1">Multi-pass membrane protein</topology>
    </subcellularLocation>
    <subcellularLocation>
        <location evidence="1">Endoplasmic reticulum-Golgi intermediate compartment membrane</location>
        <topology evidence="1">Multi-pass membrane protein</topology>
    </subcellularLocation>
    <subcellularLocation>
        <location evidence="1">Cytoplasmic vesicle</location>
        <location evidence="1">COPII-coated vesicle membrane</location>
        <topology evidence="1">Multi-pass membrane protein</topology>
    </subcellularLocation>
</comment>
<comment type="similarity">
    <text evidence="1">Belongs to the VMA21 family.</text>
</comment>
<feature type="chain" id="PRO_0000377573" description="Vacuolar ATPase assembly integral membrane protein VMA21 homolog">
    <location>
        <begin position="1"/>
        <end position="105"/>
    </location>
</feature>
<feature type="topological domain" description="Cytoplasmic" evidence="1">
    <location>
        <begin position="1"/>
        <end position="36"/>
    </location>
</feature>
<feature type="transmembrane region" description="Helical" evidence="1">
    <location>
        <begin position="37"/>
        <end position="57"/>
    </location>
</feature>
<feature type="topological domain" description="Lumenal" evidence="1">
    <location>
        <begin position="58"/>
        <end position="68"/>
    </location>
</feature>
<feature type="transmembrane region" description="Helical" evidence="1">
    <location>
        <begin position="69"/>
        <end position="89"/>
    </location>
</feature>
<feature type="topological domain" description="Cytoplasmic" evidence="1">
    <location>
        <begin position="90"/>
        <end position="105"/>
    </location>
</feature>
<feature type="region of interest" description="Disordered" evidence="2">
    <location>
        <begin position="1"/>
        <end position="26"/>
    </location>
</feature>
<feature type="sequence conflict" description="In Ref. 3; AAM11117." evidence="3" ref="3">
    <original>V</original>
    <variation>G</variation>
    <location>
        <position position="14"/>
    </location>
</feature>
<name>VMA21_DROME</name>
<organism>
    <name type="scientific">Drosophila melanogaster</name>
    <name type="common">Fruit fly</name>
    <dbReference type="NCBI Taxonomy" id="7227"/>
    <lineage>
        <taxon>Eukaryota</taxon>
        <taxon>Metazoa</taxon>
        <taxon>Ecdysozoa</taxon>
        <taxon>Arthropoda</taxon>
        <taxon>Hexapoda</taxon>
        <taxon>Insecta</taxon>
        <taxon>Pterygota</taxon>
        <taxon>Neoptera</taxon>
        <taxon>Endopterygota</taxon>
        <taxon>Diptera</taxon>
        <taxon>Brachycera</taxon>
        <taxon>Muscomorpha</taxon>
        <taxon>Ephydroidea</taxon>
        <taxon>Drosophilidae</taxon>
        <taxon>Drosophila</taxon>
        <taxon>Sophophora</taxon>
    </lineage>
</organism>
<sequence>MSTKNKKAAGGNGVAPKQTRQQSHDSQDYSSFKTVLFYCMLIVFLPVLTFFVLKGFVLDQFLDISEVKVNIASAVGAVVALHIALGLYIYRAYFGAPGSKGSKTD</sequence>
<dbReference type="EMBL" id="AE014296">
    <property type="protein sequence ID" value="AAF51611.2"/>
    <property type="molecule type" value="Genomic_DNA"/>
</dbReference>
<dbReference type="EMBL" id="AY071456">
    <property type="protein sequence ID" value="AAL49078.1"/>
    <property type="molecule type" value="mRNA"/>
</dbReference>
<dbReference type="EMBL" id="AY094764">
    <property type="protein sequence ID" value="AAM11117.1"/>
    <property type="molecule type" value="mRNA"/>
</dbReference>
<dbReference type="EMBL" id="BT050516">
    <property type="protein sequence ID" value="ACJ13223.1"/>
    <property type="molecule type" value="mRNA"/>
</dbReference>
<dbReference type="RefSeq" id="NP_788549.1">
    <property type="nucleotide sequence ID" value="NM_176371.3"/>
</dbReference>
<dbReference type="SMR" id="Q9VPE4"/>
<dbReference type="FunCoup" id="Q9VPE4">
    <property type="interactions" value="1181"/>
</dbReference>
<dbReference type="IntAct" id="Q9VPE4">
    <property type="interactions" value="4"/>
</dbReference>
<dbReference type="STRING" id="7227.FBpp0077856"/>
<dbReference type="PaxDb" id="7227-FBpp0077856"/>
<dbReference type="DNASU" id="40269"/>
<dbReference type="EnsemblMetazoa" id="FBtr0078198">
    <property type="protein sequence ID" value="FBpp0077856"/>
    <property type="gene ID" value="FBgn0036998"/>
</dbReference>
<dbReference type="GeneID" id="40269"/>
<dbReference type="KEGG" id="dme:Dmel_CG5969"/>
<dbReference type="UCSC" id="CG5969-RA">
    <property type="organism name" value="d. melanogaster"/>
</dbReference>
<dbReference type="AGR" id="FB:FBgn0036998"/>
<dbReference type="FlyBase" id="FBgn0036998">
    <property type="gene designation" value="CG5969"/>
</dbReference>
<dbReference type="VEuPathDB" id="VectorBase:FBgn0036998"/>
<dbReference type="eggNOG" id="KOG4783">
    <property type="taxonomic scope" value="Eukaryota"/>
</dbReference>
<dbReference type="GeneTree" id="ENSGT00390000017980"/>
<dbReference type="HOGENOM" id="CLU_143588_2_0_1"/>
<dbReference type="InParanoid" id="Q9VPE4"/>
<dbReference type="OMA" id="PYFRGNE"/>
<dbReference type="OrthoDB" id="160405at2759"/>
<dbReference type="PhylomeDB" id="Q9VPE4"/>
<dbReference type="BioGRID-ORCS" id="40269">
    <property type="hits" value="0 hits in 1 CRISPR screen"/>
</dbReference>
<dbReference type="GenomeRNAi" id="40269"/>
<dbReference type="PRO" id="PR:Q9VPE4"/>
<dbReference type="Proteomes" id="UP000000803">
    <property type="component" value="Chromosome 3L"/>
</dbReference>
<dbReference type="Bgee" id="FBgn0036998">
    <property type="expression patterns" value="Expressed in adult abdomen and 119 other cell types or tissues"/>
</dbReference>
<dbReference type="ExpressionAtlas" id="Q9VPE4">
    <property type="expression patterns" value="baseline and differential"/>
</dbReference>
<dbReference type="GO" id="GO:0005789">
    <property type="term" value="C:endoplasmic reticulum membrane"/>
    <property type="evidence" value="ECO:0000318"/>
    <property type="project" value="GO_Central"/>
</dbReference>
<dbReference type="GO" id="GO:0033116">
    <property type="term" value="C:endoplasmic reticulum-Golgi intermediate compartment membrane"/>
    <property type="evidence" value="ECO:0007669"/>
    <property type="project" value="UniProtKB-SubCell"/>
</dbReference>
<dbReference type="GO" id="GO:0012507">
    <property type="term" value="C:ER to Golgi transport vesicle membrane"/>
    <property type="evidence" value="ECO:0007669"/>
    <property type="project" value="UniProtKB-SubCell"/>
</dbReference>
<dbReference type="GO" id="GO:0070072">
    <property type="term" value="P:vacuolar proton-transporting V-type ATPase complex assembly"/>
    <property type="evidence" value="ECO:0000318"/>
    <property type="project" value="GO_Central"/>
</dbReference>
<dbReference type="HAMAP" id="MF_03058">
    <property type="entry name" value="VMA21"/>
    <property type="match status" value="1"/>
</dbReference>
<dbReference type="InterPro" id="IPR019013">
    <property type="entry name" value="Vma21"/>
</dbReference>
<dbReference type="Pfam" id="PF09446">
    <property type="entry name" value="VMA21"/>
    <property type="match status" value="1"/>
</dbReference>